<gene>
    <name evidence="1" type="primary">dcd</name>
    <name type="ordered locus">Hbut_1159</name>
</gene>
<comment type="function">
    <text evidence="1">Catalyzes the deamination of dCTP to dUTP.</text>
</comment>
<comment type="catalytic activity">
    <reaction evidence="1">
        <text>dCTP + H2O + H(+) = dUTP + NH4(+)</text>
        <dbReference type="Rhea" id="RHEA:22680"/>
        <dbReference type="ChEBI" id="CHEBI:15377"/>
        <dbReference type="ChEBI" id="CHEBI:15378"/>
        <dbReference type="ChEBI" id="CHEBI:28938"/>
        <dbReference type="ChEBI" id="CHEBI:61481"/>
        <dbReference type="ChEBI" id="CHEBI:61555"/>
        <dbReference type="EC" id="3.5.4.13"/>
    </reaction>
</comment>
<comment type="pathway">
    <text evidence="1">Pyrimidine metabolism; dUMP biosynthesis; dUMP from dCTP (dUTP route): step 1/2.</text>
</comment>
<comment type="subunit">
    <text evidence="1">Homotrimer.</text>
</comment>
<comment type="similarity">
    <text evidence="1">Belongs to the dCTP deaminase family.</text>
</comment>
<accession>A2BLY5</accession>
<feature type="chain" id="PRO_1000009740" description="dCTP deaminase">
    <location>
        <begin position="1"/>
        <end position="176"/>
    </location>
</feature>
<feature type="active site" description="Proton donor/acceptor" evidence="1">
    <location>
        <position position="128"/>
    </location>
</feature>
<feature type="binding site" evidence="1">
    <location>
        <begin position="102"/>
        <end position="107"/>
    </location>
    <ligand>
        <name>dCTP</name>
        <dbReference type="ChEBI" id="CHEBI:61481"/>
    </ligand>
</feature>
<feature type="binding site" evidence="1">
    <location>
        <position position="118"/>
    </location>
    <ligand>
        <name>dCTP</name>
        <dbReference type="ChEBI" id="CHEBI:61481"/>
    </ligand>
</feature>
<feature type="binding site" evidence="1">
    <location>
        <position position="160"/>
    </location>
    <ligand>
        <name>dCTP</name>
        <dbReference type="ChEBI" id="CHEBI:61481"/>
    </ligand>
</feature>
<feature type="binding site" evidence="1">
    <location>
        <position position="167"/>
    </location>
    <ligand>
        <name>dCTP</name>
        <dbReference type="ChEBI" id="CHEBI:61481"/>
    </ligand>
</feature>
<organism>
    <name type="scientific">Hyperthermus butylicus (strain DSM 5456 / JCM 9403 / PLM1-5)</name>
    <dbReference type="NCBI Taxonomy" id="415426"/>
    <lineage>
        <taxon>Archaea</taxon>
        <taxon>Thermoproteota</taxon>
        <taxon>Thermoprotei</taxon>
        <taxon>Desulfurococcales</taxon>
        <taxon>Pyrodictiaceae</taxon>
        <taxon>Hyperthermus</taxon>
    </lineage>
</organism>
<keyword id="KW-0378">Hydrolase</keyword>
<keyword id="KW-0546">Nucleotide metabolism</keyword>
<keyword id="KW-0547">Nucleotide-binding</keyword>
<keyword id="KW-1185">Reference proteome</keyword>
<evidence type="ECO:0000255" key="1">
    <source>
        <dbReference type="HAMAP-Rule" id="MF_00146"/>
    </source>
</evidence>
<sequence length="176" mass="20022">MILSDRDIAWYIEKGLLRIDPLLDDTIRENGVDLRLDSEFCRFNPDAPELDTRKPFNREIYYNCVKVDPEQGFTVKPYEHVLATTMETVCLPDDLVGLVNVRSTFARYGIFVPPTVIDAGFCGQITIEIIGSAYPVRLYPGQRFLHVVFVRTTSPVANPYHGKYQGQRGVTPPRPD</sequence>
<name>DCD_HYPBU</name>
<proteinExistence type="inferred from homology"/>
<reference key="1">
    <citation type="journal article" date="2007" name="Archaea">
        <title>The genome of Hyperthermus butylicus: a sulfur-reducing, peptide fermenting, neutrophilic Crenarchaeote growing up to 108 degrees C.</title>
        <authorList>
            <person name="Bruegger K."/>
            <person name="Chen L."/>
            <person name="Stark M."/>
            <person name="Zibat A."/>
            <person name="Redder P."/>
            <person name="Ruepp A."/>
            <person name="Awayez M."/>
            <person name="She Q."/>
            <person name="Garrett R.A."/>
            <person name="Klenk H.-P."/>
        </authorList>
    </citation>
    <scope>NUCLEOTIDE SEQUENCE [LARGE SCALE GENOMIC DNA]</scope>
    <source>
        <strain>DSM 5456 / JCM 9403 / PLM1-5</strain>
    </source>
</reference>
<protein>
    <recommendedName>
        <fullName evidence="1">dCTP deaminase</fullName>
        <ecNumber evidence="1">3.5.4.13</ecNumber>
    </recommendedName>
    <alternativeName>
        <fullName evidence="1">Deoxycytidine triphosphate deaminase</fullName>
    </alternativeName>
</protein>
<dbReference type="EC" id="3.5.4.13" evidence="1"/>
<dbReference type="EMBL" id="CP000493">
    <property type="protein sequence ID" value="ABM80996.1"/>
    <property type="molecule type" value="Genomic_DNA"/>
</dbReference>
<dbReference type="RefSeq" id="WP_011822314.1">
    <property type="nucleotide sequence ID" value="NC_008818.1"/>
</dbReference>
<dbReference type="SMR" id="A2BLY5"/>
<dbReference type="STRING" id="415426.Hbut_1159"/>
<dbReference type="EnsemblBacteria" id="ABM80996">
    <property type="protein sequence ID" value="ABM80996"/>
    <property type="gene ID" value="Hbut_1159"/>
</dbReference>
<dbReference type="GeneID" id="4782584"/>
<dbReference type="KEGG" id="hbu:Hbut_1159"/>
<dbReference type="eggNOG" id="arCOG04048">
    <property type="taxonomic scope" value="Archaea"/>
</dbReference>
<dbReference type="HOGENOM" id="CLU_087476_3_0_2"/>
<dbReference type="OrthoDB" id="33242at2157"/>
<dbReference type="UniPathway" id="UPA00610">
    <property type="reaction ID" value="UER00665"/>
</dbReference>
<dbReference type="Proteomes" id="UP000002593">
    <property type="component" value="Chromosome"/>
</dbReference>
<dbReference type="GO" id="GO:0008829">
    <property type="term" value="F:dCTP deaminase activity"/>
    <property type="evidence" value="ECO:0007669"/>
    <property type="project" value="UniProtKB-UniRule"/>
</dbReference>
<dbReference type="GO" id="GO:0000166">
    <property type="term" value="F:nucleotide binding"/>
    <property type="evidence" value="ECO:0007669"/>
    <property type="project" value="UniProtKB-KW"/>
</dbReference>
<dbReference type="GO" id="GO:0006226">
    <property type="term" value="P:dUMP biosynthetic process"/>
    <property type="evidence" value="ECO:0007669"/>
    <property type="project" value="UniProtKB-UniPathway"/>
</dbReference>
<dbReference type="GO" id="GO:0006229">
    <property type="term" value="P:dUTP biosynthetic process"/>
    <property type="evidence" value="ECO:0007669"/>
    <property type="project" value="UniProtKB-UniRule"/>
</dbReference>
<dbReference type="CDD" id="cd07557">
    <property type="entry name" value="trimeric_dUTPase"/>
    <property type="match status" value="1"/>
</dbReference>
<dbReference type="Gene3D" id="2.70.40.10">
    <property type="match status" value="1"/>
</dbReference>
<dbReference type="HAMAP" id="MF_00146">
    <property type="entry name" value="dCTP_deaminase"/>
    <property type="match status" value="1"/>
</dbReference>
<dbReference type="InterPro" id="IPR011962">
    <property type="entry name" value="dCTP_deaminase"/>
</dbReference>
<dbReference type="InterPro" id="IPR036157">
    <property type="entry name" value="dUTPase-like_sf"/>
</dbReference>
<dbReference type="InterPro" id="IPR033704">
    <property type="entry name" value="dUTPase_trimeric"/>
</dbReference>
<dbReference type="NCBIfam" id="TIGR02274">
    <property type="entry name" value="dCTP_deam"/>
    <property type="match status" value="1"/>
</dbReference>
<dbReference type="PANTHER" id="PTHR42680">
    <property type="entry name" value="DCTP DEAMINASE"/>
    <property type="match status" value="1"/>
</dbReference>
<dbReference type="PANTHER" id="PTHR42680:SF3">
    <property type="entry name" value="DCTP DEAMINASE"/>
    <property type="match status" value="1"/>
</dbReference>
<dbReference type="Pfam" id="PF22769">
    <property type="entry name" value="DCD"/>
    <property type="match status" value="1"/>
</dbReference>
<dbReference type="SUPFAM" id="SSF51283">
    <property type="entry name" value="dUTPase-like"/>
    <property type="match status" value="1"/>
</dbReference>